<organism>
    <name type="scientific">Shewanella sp. (strain MR-4)</name>
    <dbReference type="NCBI Taxonomy" id="60480"/>
    <lineage>
        <taxon>Bacteria</taxon>
        <taxon>Pseudomonadati</taxon>
        <taxon>Pseudomonadota</taxon>
        <taxon>Gammaproteobacteria</taxon>
        <taxon>Alteromonadales</taxon>
        <taxon>Shewanellaceae</taxon>
        <taxon>Shewanella</taxon>
    </lineage>
</organism>
<reference key="1">
    <citation type="submission" date="2006-08" db="EMBL/GenBank/DDBJ databases">
        <title>Complete sequence of Shewanella sp. MR-4.</title>
        <authorList>
            <consortium name="US DOE Joint Genome Institute"/>
            <person name="Copeland A."/>
            <person name="Lucas S."/>
            <person name="Lapidus A."/>
            <person name="Barry K."/>
            <person name="Detter J.C."/>
            <person name="Glavina del Rio T."/>
            <person name="Hammon N."/>
            <person name="Israni S."/>
            <person name="Dalin E."/>
            <person name="Tice H."/>
            <person name="Pitluck S."/>
            <person name="Kiss H."/>
            <person name="Brettin T."/>
            <person name="Bruce D."/>
            <person name="Han C."/>
            <person name="Tapia R."/>
            <person name="Gilna P."/>
            <person name="Schmutz J."/>
            <person name="Larimer F."/>
            <person name="Land M."/>
            <person name="Hauser L."/>
            <person name="Kyrpides N."/>
            <person name="Mikhailova N."/>
            <person name="Nealson K."/>
            <person name="Konstantinidis K."/>
            <person name="Klappenbach J."/>
            <person name="Tiedje J."/>
            <person name="Richardson P."/>
        </authorList>
    </citation>
    <scope>NUCLEOTIDE SEQUENCE [LARGE SCALE GENOMIC DNA]</scope>
    <source>
        <strain>MR-4</strain>
    </source>
</reference>
<dbReference type="EMBL" id="CP000446">
    <property type="protein sequence ID" value="ABI40159.1"/>
    <property type="molecule type" value="Genomic_DNA"/>
</dbReference>
<dbReference type="RefSeq" id="WP_011623832.1">
    <property type="nucleotide sequence ID" value="NC_008321.1"/>
</dbReference>
<dbReference type="SMR" id="Q0HFK8"/>
<dbReference type="KEGG" id="she:Shewmr4_3088"/>
<dbReference type="HOGENOM" id="CLU_005912_9_2_6"/>
<dbReference type="GO" id="GO:0005886">
    <property type="term" value="C:plasma membrane"/>
    <property type="evidence" value="ECO:0007669"/>
    <property type="project" value="UniProtKB-SubCell"/>
</dbReference>
<dbReference type="GO" id="GO:0050660">
    <property type="term" value="F:flavin adenine dinucleotide binding"/>
    <property type="evidence" value="ECO:0007669"/>
    <property type="project" value="InterPro"/>
</dbReference>
<dbReference type="GO" id="GO:0015386">
    <property type="term" value="F:potassium:proton antiporter activity"/>
    <property type="evidence" value="ECO:0007669"/>
    <property type="project" value="UniProtKB-UniRule"/>
</dbReference>
<dbReference type="GO" id="GO:0006884">
    <property type="term" value="P:cell volume homeostasis"/>
    <property type="evidence" value="ECO:0007669"/>
    <property type="project" value="InterPro"/>
</dbReference>
<dbReference type="Gene3D" id="1.20.1530.20">
    <property type="match status" value="1"/>
</dbReference>
<dbReference type="Gene3D" id="3.30.70.1450">
    <property type="entry name" value="Regulator of K+ conductance, C-terminal domain"/>
    <property type="match status" value="1"/>
</dbReference>
<dbReference type="HAMAP" id="MF_01075">
    <property type="entry name" value="NhaP2"/>
    <property type="match status" value="1"/>
</dbReference>
<dbReference type="InterPro" id="IPR006153">
    <property type="entry name" value="Cation/H_exchanger_TM"/>
</dbReference>
<dbReference type="InterPro" id="IPR036318">
    <property type="entry name" value="FAD-bd_PCMH-like_sf"/>
</dbReference>
<dbReference type="InterPro" id="IPR038770">
    <property type="entry name" value="Na+/solute_symporter_sf"/>
</dbReference>
<dbReference type="InterPro" id="IPR023729">
    <property type="entry name" value="NhaP2"/>
</dbReference>
<dbReference type="InterPro" id="IPR006037">
    <property type="entry name" value="RCK_C"/>
</dbReference>
<dbReference type="InterPro" id="IPR036721">
    <property type="entry name" value="RCK_C_sf"/>
</dbReference>
<dbReference type="InterPro" id="IPR005170">
    <property type="entry name" value="Transptr-assoc_dom"/>
</dbReference>
<dbReference type="NCBIfam" id="NF003714">
    <property type="entry name" value="PRK05326.1-1"/>
    <property type="match status" value="1"/>
</dbReference>
<dbReference type="NCBIfam" id="NF003715">
    <property type="entry name" value="PRK05326.1-2"/>
    <property type="match status" value="1"/>
</dbReference>
<dbReference type="NCBIfam" id="NF003716">
    <property type="entry name" value="PRK05326.1-3"/>
    <property type="match status" value="1"/>
</dbReference>
<dbReference type="PANTHER" id="PTHR32507:SF7">
    <property type="entry name" value="K(+)_H(+) ANTIPORTER NHAP2"/>
    <property type="match status" value="1"/>
</dbReference>
<dbReference type="PANTHER" id="PTHR32507">
    <property type="entry name" value="NA(+)/H(+) ANTIPORTER 1"/>
    <property type="match status" value="1"/>
</dbReference>
<dbReference type="Pfam" id="PF03471">
    <property type="entry name" value="CorC_HlyC"/>
    <property type="match status" value="1"/>
</dbReference>
<dbReference type="Pfam" id="PF00999">
    <property type="entry name" value="Na_H_Exchanger"/>
    <property type="match status" value="1"/>
</dbReference>
<dbReference type="Pfam" id="PF02080">
    <property type="entry name" value="TrkA_C"/>
    <property type="match status" value="1"/>
</dbReference>
<dbReference type="SMART" id="SM01091">
    <property type="entry name" value="CorC_HlyC"/>
    <property type="match status" value="1"/>
</dbReference>
<dbReference type="SUPFAM" id="SSF56176">
    <property type="entry name" value="FAD-binding/transporter-associated domain-like"/>
    <property type="match status" value="1"/>
</dbReference>
<dbReference type="SUPFAM" id="SSF116726">
    <property type="entry name" value="TrkA C-terminal domain-like"/>
    <property type="match status" value="1"/>
</dbReference>
<dbReference type="PROSITE" id="PS51202">
    <property type="entry name" value="RCK_C"/>
    <property type="match status" value="1"/>
</dbReference>
<gene>
    <name evidence="1" type="primary">nhaP2</name>
    <name type="synonym">cvrA</name>
    <name type="ordered locus">Shewmr4_3088</name>
</gene>
<sequence length="574" mass="61528">MDADSINSFFLIGALLAAVSVLLSPVSSRLGIPILLIFLAVGILAGEDGPGGILFDDYSTAYLVSNLALAIILLDGGMRTRVASFRVALWPALSLATFGVAITTSITGVMAAWLFDLHWLQGLLVGAIVGSTDAAAVFSLLKGRSLNERVGATLEIESGSNDPMAVFLTVTLIAILGNVDAELSASFMLISFIKQFGLGIFLGLGGGWLLWKLVNLSKLAEGLYSILVLSGGLMIYAASNKLGGSGILSIYLVGLFLGNKPTRGRHSILNVLDGMTWVSQIGMFLVLGLLLTPSDLLDIWLPGLALAFGMILFARPLAVWLSLLPFKSFSSRDRWFISWVGLRGAVPIILAVFPMMAGLPGAQLYFNLAFFVVLVSLLVQGASLTTAARLAKVELPPKPLPISRSGVEIYPSSEWEVFVYRLSENKWCIGEPLKRLSMPDGTRIAAVFRHNTLLHPSGSTCLEAGDILCVLGQEKSLEALSNLFSQAPETKEVPRFFGDFFIDTEVKLLDLAPIYGLELDEATGDMTVADLVAAELGSHPVLGDQFLWQSLHWVVAGLYEGKVTNVGIRLPAEA</sequence>
<comment type="function">
    <text evidence="1">K(+)/H(+) antiporter that extrudes potassium in exchange for external protons and maintains the internal concentration of potassium under toxic levels.</text>
</comment>
<comment type="catalytic activity">
    <reaction evidence="1">
        <text>K(+)(in) + H(+)(out) = K(+)(out) + H(+)(in)</text>
        <dbReference type="Rhea" id="RHEA:29467"/>
        <dbReference type="ChEBI" id="CHEBI:15378"/>
        <dbReference type="ChEBI" id="CHEBI:29103"/>
    </reaction>
    <physiologicalReaction direction="left-to-right" evidence="1">
        <dbReference type="Rhea" id="RHEA:29468"/>
    </physiologicalReaction>
</comment>
<comment type="subcellular location">
    <subcellularLocation>
        <location evidence="1">Cell inner membrane</location>
        <topology evidence="1">Multi-pass membrane protein</topology>
    </subcellularLocation>
</comment>
<comment type="similarity">
    <text evidence="1">Belongs to the monovalent cation:proton antiporter 1 (CPA1) transporter (TC 2.A.36) family. NhaP2 subfamily.</text>
</comment>
<feature type="chain" id="PRO_0000278159" description="K(+)/H(+) antiporter NhaP2">
    <location>
        <begin position="1"/>
        <end position="574"/>
    </location>
</feature>
<feature type="transmembrane region" description="Helical" evidence="1">
    <location>
        <begin position="6"/>
        <end position="26"/>
    </location>
</feature>
<feature type="transmembrane region" description="Helical" evidence="1">
    <location>
        <begin position="34"/>
        <end position="54"/>
    </location>
</feature>
<feature type="transmembrane region" description="Helical" evidence="1">
    <location>
        <begin position="58"/>
        <end position="78"/>
    </location>
</feature>
<feature type="transmembrane region" description="Helical" evidence="1">
    <location>
        <begin position="87"/>
        <end position="107"/>
    </location>
</feature>
<feature type="transmembrane region" description="Helical" evidence="1">
    <location>
        <begin position="109"/>
        <end position="129"/>
    </location>
</feature>
<feature type="transmembrane region" description="Helical" evidence="1">
    <location>
        <begin position="173"/>
        <end position="193"/>
    </location>
</feature>
<feature type="transmembrane region" description="Helical" evidence="1">
    <location>
        <begin position="196"/>
        <end position="216"/>
    </location>
</feature>
<feature type="transmembrane region" description="Helical" evidence="1">
    <location>
        <begin position="219"/>
        <end position="239"/>
    </location>
</feature>
<feature type="transmembrane region" description="Helical" evidence="1">
    <location>
        <begin position="242"/>
        <end position="262"/>
    </location>
</feature>
<feature type="transmembrane region" description="Helical" evidence="1">
    <location>
        <begin position="271"/>
        <end position="291"/>
    </location>
</feature>
<feature type="transmembrane region" description="Helical" evidence="1">
    <location>
        <begin position="299"/>
        <end position="319"/>
    </location>
</feature>
<feature type="transmembrane region" description="Helical" evidence="1">
    <location>
        <begin position="335"/>
        <end position="355"/>
    </location>
</feature>
<feature type="transmembrane region" description="Helical" evidence="1">
    <location>
        <begin position="359"/>
        <end position="379"/>
    </location>
</feature>
<feature type="domain" description="RCK C-terminal" evidence="1">
    <location>
        <begin position="405"/>
        <end position="486"/>
    </location>
</feature>
<evidence type="ECO:0000255" key="1">
    <source>
        <dbReference type="HAMAP-Rule" id="MF_01075"/>
    </source>
</evidence>
<accession>Q0HFK8</accession>
<protein>
    <recommendedName>
        <fullName evidence="1">K(+)/H(+) antiporter NhaP2</fullName>
    </recommendedName>
    <alternativeName>
        <fullName evidence="1">Potassium/proton antiporter NhaP2</fullName>
    </alternativeName>
</protein>
<proteinExistence type="inferred from homology"/>
<keyword id="KW-0050">Antiport</keyword>
<keyword id="KW-0997">Cell inner membrane</keyword>
<keyword id="KW-1003">Cell membrane</keyword>
<keyword id="KW-0406">Ion transport</keyword>
<keyword id="KW-0472">Membrane</keyword>
<keyword id="KW-0630">Potassium</keyword>
<keyword id="KW-0633">Potassium transport</keyword>
<keyword id="KW-0812">Transmembrane</keyword>
<keyword id="KW-1133">Transmembrane helix</keyword>
<keyword id="KW-0813">Transport</keyword>
<name>NHAP2_SHESM</name>